<protein>
    <recommendedName>
        <fullName evidence="1">Large ribosomal subunit protein bL31</fullName>
    </recommendedName>
    <alternativeName>
        <fullName evidence="3">50S ribosomal protein L31</fullName>
    </alternativeName>
</protein>
<reference key="1">
    <citation type="submission" date="2006-05" db="EMBL/GenBank/DDBJ databases">
        <authorList>
            <consortium name="Genoscope"/>
        </authorList>
    </citation>
    <scope>NUCLEOTIDE SEQUENCE [LARGE SCALE GENOMIC DNA]</scope>
    <source>
        <strain>RCC307</strain>
    </source>
</reference>
<evidence type="ECO:0000255" key="1">
    <source>
        <dbReference type="HAMAP-Rule" id="MF_00501"/>
    </source>
</evidence>
<evidence type="ECO:0000256" key="2">
    <source>
        <dbReference type="SAM" id="MobiDB-lite"/>
    </source>
</evidence>
<evidence type="ECO:0000305" key="3"/>
<name>RL31_SYNR3</name>
<gene>
    <name evidence="1" type="primary">rpmE</name>
    <name evidence="1" type="synonym">rpl31</name>
    <name type="ordered locus">SynRCC307_2144</name>
</gene>
<dbReference type="EMBL" id="CT978603">
    <property type="protein sequence ID" value="CAK29047.1"/>
    <property type="molecule type" value="Genomic_DNA"/>
</dbReference>
<dbReference type="STRING" id="316278.SynRCC307_2144"/>
<dbReference type="KEGG" id="syr:SynRCC307_2144"/>
<dbReference type="eggNOG" id="COG0254">
    <property type="taxonomic scope" value="Bacteria"/>
</dbReference>
<dbReference type="HOGENOM" id="CLU_114306_1_2_3"/>
<dbReference type="OrthoDB" id="9803251at2"/>
<dbReference type="Proteomes" id="UP000001115">
    <property type="component" value="Chromosome"/>
</dbReference>
<dbReference type="GO" id="GO:1990904">
    <property type="term" value="C:ribonucleoprotein complex"/>
    <property type="evidence" value="ECO:0007669"/>
    <property type="project" value="UniProtKB-KW"/>
</dbReference>
<dbReference type="GO" id="GO:0005840">
    <property type="term" value="C:ribosome"/>
    <property type="evidence" value="ECO:0007669"/>
    <property type="project" value="UniProtKB-KW"/>
</dbReference>
<dbReference type="GO" id="GO:0019843">
    <property type="term" value="F:rRNA binding"/>
    <property type="evidence" value="ECO:0007669"/>
    <property type="project" value="UniProtKB-KW"/>
</dbReference>
<dbReference type="GO" id="GO:0003735">
    <property type="term" value="F:structural constituent of ribosome"/>
    <property type="evidence" value="ECO:0007669"/>
    <property type="project" value="InterPro"/>
</dbReference>
<dbReference type="GO" id="GO:0006412">
    <property type="term" value="P:translation"/>
    <property type="evidence" value="ECO:0007669"/>
    <property type="project" value="UniProtKB-UniRule"/>
</dbReference>
<dbReference type="Gene3D" id="4.10.830.30">
    <property type="entry name" value="Ribosomal protein L31"/>
    <property type="match status" value="1"/>
</dbReference>
<dbReference type="HAMAP" id="MF_00501">
    <property type="entry name" value="Ribosomal_bL31_1"/>
    <property type="match status" value="1"/>
</dbReference>
<dbReference type="InterPro" id="IPR034704">
    <property type="entry name" value="Ribosomal_bL28/bL31-like_sf"/>
</dbReference>
<dbReference type="InterPro" id="IPR002150">
    <property type="entry name" value="Ribosomal_bL31"/>
</dbReference>
<dbReference type="InterPro" id="IPR027491">
    <property type="entry name" value="Ribosomal_bL31_A"/>
</dbReference>
<dbReference type="InterPro" id="IPR042105">
    <property type="entry name" value="Ribosomal_bL31_sf"/>
</dbReference>
<dbReference type="NCBIfam" id="TIGR00105">
    <property type="entry name" value="L31"/>
    <property type="match status" value="1"/>
</dbReference>
<dbReference type="NCBIfam" id="NF001809">
    <property type="entry name" value="PRK00528.1"/>
    <property type="match status" value="1"/>
</dbReference>
<dbReference type="PANTHER" id="PTHR33280">
    <property type="entry name" value="50S RIBOSOMAL PROTEIN L31, CHLOROPLASTIC"/>
    <property type="match status" value="1"/>
</dbReference>
<dbReference type="PANTHER" id="PTHR33280:SF1">
    <property type="entry name" value="LARGE RIBOSOMAL SUBUNIT PROTEIN BL31C"/>
    <property type="match status" value="1"/>
</dbReference>
<dbReference type="Pfam" id="PF01197">
    <property type="entry name" value="Ribosomal_L31"/>
    <property type="match status" value="1"/>
</dbReference>
<dbReference type="PRINTS" id="PR01249">
    <property type="entry name" value="RIBOSOMALL31"/>
</dbReference>
<dbReference type="SUPFAM" id="SSF143800">
    <property type="entry name" value="L28p-like"/>
    <property type="match status" value="1"/>
</dbReference>
<dbReference type="PROSITE" id="PS01143">
    <property type="entry name" value="RIBOSOMAL_L31"/>
    <property type="match status" value="1"/>
</dbReference>
<feature type="chain" id="PRO_1000126750" description="Large ribosomal subunit protein bL31">
    <location>
        <begin position="1"/>
        <end position="92"/>
    </location>
</feature>
<feature type="region of interest" description="Disordered" evidence="2">
    <location>
        <begin position="66"/>
        <end position="92"/>
    </location>
</feature>
<feature type="compositionally biased region" description="Low complexity" evidence="2">
    <location>
        <begin position="70"/>
        <end position="80"/>
    </location>
</feature>
<proteinExistence type="inferred from homology"/>
<sequence length="92" mass="10050">MAKPDIHPTWYPDAKVICNGEVVMTTGSTTPELHVDVWSGNHPFFTGTQKILDTEGRVDRFMRKYGMGSANPDVDAPAPKKAAKKSDAESDS</sequence>
<keyword id="KW-1185">Reference proteome</keyword>
<keyword id="KW-0687">Ribonucleoprotein</keyword>
<keyword id="KW-0689">Ribosomal protein</keyword>
<keyword id="KW-0694">RNA-binding</keyword>
<keyword id="KW-0699">rRNA-binding</keyword>
<comment type="function">
    <text evidence="1">Binds the 23S rRNA.</text>
</comment>
<comment type="subunit">
    <text evidence="1">Part of the 50S ribosomal subunit.</text>
</comment>
<comment type="similarity">
    <text evidence="1">Belongs to the bacterial ribosomal protein bL31 family. Type A subfamily.</text>
</comment>
<organism>
    <name type="scientific">Synechococcus sp. (strain RCC307)</name>
    <dbReference type="NCBI Taxonomy" id="316278"/>
    <lineage>
        <taxon>Bacteria</taxon>
        <taxon>Bacillati</taxon>
        <taxon>Cyanobacteriota</taxon>
        <taxon>Cyanophyceae</taxon>
        <taxon>Synechococcales</taxon>
        <taxon>Synechococcaceae</taxon>
        <taxon>Synechococcus</taxon>
    </lineage>
</organism>
<accession>A5GVY8</accession>